<sequence length="373" mass="42053">MNKKVALITGITGQDGSYLAEFLLEKGYEVHGIKRRSSLFNTQRVDHLYKDPHEEDVNFKLHYGDLTDSSNLTRILAEVQPDEVYNLGAQSHVAVSFQSPEYTADVDAIGTLRLLEAIRFLGLTKKTKFYQASTSELYGLVQEIPQKETTPFYPRSPYAVAKMYAYWITINYRESYGIYACNGILFNHESPRRGETFVTRKITRGMANIAQGLEKCLFMGNLDALRDWGHAKDYVKMQWMMLQQDEPRDFVIATGVQYSVREFIDMSARELGIELEFVGKGVDEKAVVKSVIGTKAPAIKVGDIIVAVDPAYFRPAEVETLLGDPSLAKKELGWVPEITLQQMVSEMVASDLEQAQSHALLKKHGYNVNVSVE</sequence>
<protein>
    <recommendedName>
        <fullName evidence="1">GDP-mannose 4,6-dehydratase</fullName>
        <ecNumber evidence="1">4.2.1.47</ecNumber>
    </recommendedName>
    <alternativeName>
        <fullName evidence="1">GDP-D-mannose dehydratase</fullName>
    </alternativeName>
</protein>
<accession>Q06952</accession>
<keyword id="KW-0456">Lyase</keyword>
<keyword id="KW-0521">NADP</keyword>
<keyword id="KW-1185">Reference proteome</keyword>
<evidence type="ECO:0000255" key="1">
    <source>
        <dbReference type="HAMAP-Rule" id="MF_00955"/>
    </source>
</evidence>
<reference key="1">
    <citation type="journal article" date="1992" name="Proc. Natl. Acad. Sci. U.S.A.">
        <title>Serotype conversion in Vibrio cholerae O1.</title>
        <authorList>
            <person name="Stroeher U.H."/>
            <person name="Karageorgos L.E."/>
            <person name="Morona R."/>
            <person name="Manning P.A."/>
        </authorList>
    </citation>
    <scope>NUCLEOTIDE SEQUENCE [GENOMIC DNA]</scope>
    <source>
        <strain>El Tor O17 / Serotype O1</strain>
    </source>
</reference>
<reference key="2">
    <citation type="journal article" date="1995" name="Gene">
        <title>Putative O-antigen transport genes within the rfb region of Vibrio cholerae O1 are homologous to those for capsule transport.</title>
        <authorList>
            <person name="Manning P.A."/>
            <person name="Stroeher U.H."/>
            <person name="Karageorgos L.E."/>
            <person name="Morona R."/>
        </authorList>
    </citation>
    <scope>NUCLEOTIDE SEQUENCE [GENOMIC DNA]</scope>
    <source>
        <strain>El Tor O17 / Serotype O1</strain>
    </source>
</reference>
<reference key="3">
    <citation type="journal article" date="2000" name="Nature">
        <title>DNA sequence of both chromosomes of the cholera pathogen Vibrio cholerae.</title>
        <authorList>
            <person name="Heidelberg J.F."/>
            <person name="Eisen J.A."/>
            <person name="Nelson W.C."/>
            <person name="Clayton R.A."/>
            <person name="Gwinn M.L."/>
            <person name="Dodson R.J."/>
            <person name="Haft D.H."/>
            <person name="Hickey E.K."/>
            <person name="Peterson J.D."/>
            <person name="Umayam L.A."/>
            <person name="Gill S.R."/>
            <person name="Nelson K.E."/>
            <person name="Read T.D."/>
            <person name="Tettelin H."/>
            <person name="Richardson D.L."/>
            <person name="Ermolaeva M.D."/>
            <person name="Vamathevan J.J."/>
            <person name="Bass S."/>
            <person name="Qin H."/>
            <person name="Dragoi I."/>
            <person name="Sellers P."/>
            <person name="McDonald L.A."/>
            <person name="Utterback T.R."/>
            <person name="Fleischmann R.D."/>
            <person name="Nierman W.C."/>
            <person name="White O."/>
            <person name="Salzberg S.L."/>
            <person name="Smith H.O."/>
            <person name="Colwell R.R."/>
            <person name="Mekalanos J.J."/>
            <person name="Venter J.C."/>
            <person name="Fraser C.M."/>
        </authorList>
    </citation>
    <scope>NUCLEOTIDE SEQUENCE [LARGE SCALE GENOMIC DNA]</scope>
    <source>
        <strain>ATCC 39315 / El Tor Inaba N16961</strain>
    </source>
</reference>
<organism>
    <name type="scientific">Vibrio cholerae serotype O1 (strain ATCC 39315 / El Tor Inaba N16961)</name>
    <dbReference type="NCBI Taxonomy" id="243277"/>
    <lineage>
        <taxon>Bacteria</taxon>
        <taxon>Pseudomonadati</taxon>
        <taxon>Pseudomonadota</taxon>
        <taxon>Gammaproteobacteria</taxon>
        <taxon>Vibrionales</taxon>
        <taxon>Vibrionaceae</taxon>
        <taxon>Vibrio</taxon>
    </lineage>
</organism>
<name>GM4D_VIBCH</name>
<dbReference type="EC" id="4.2.1.47" evidence="1"/>
<dbReference type="EMBL" id="X59554">
    <property type="protein sequence ID" value="CAA42136.1"/>
    <property type="molecule type" value="Genomic_DNA"/>
</dbReference>
<dbReference type="EMBL" id="AE003852">
    <property type="protein sequence ID" value="AAF93419.1"/>
    <property type="molecule type" value="Genomic_DNA"/>
</dbReference>
<dbReference type="PIR" id="S28470">
    <property type="entry name" value="S28470"/>
</dbReference>
<dbReference type="RefSeq" id="NP_229900.1">
    <property type="nucleotide sequence ID" value="NC_002505.1"/>
</dbReference>
<dbReference type="RefSeq" id="WP_001036868.1">
    <property type="nucleotide sequence ID" value="NZ_LT906614.1"/>
</dbReference>
<dbReference type="SMR" id="Q06952"/>
<dbReference type="STRING" id="243277.VC_0243"/>
<dbReference type="DNASU" id="2614706"/>
<dbReference type="EnsemblBacteria" id="AAF93419">
    <property type="protein sequence ID" value="AAF93419"/>
    <property type="gene ID" value="VC_0243"/>
</dbReference>
<dbReference type="KEGG" id="vch:VC_0243"/>
<dbReference type="PATRIC" id="fig|243277.26.peg.224"/>
<dbReference type="eggNOG" id="COG1089">
    <property type="taxonomic scope" value="Bacteria"/>
</dbReference>
<dbReference type="HOGENOM" id="CLU_007383_14_0_6"/>
<dbReference type="BioCyc" id="MetaCyc:MONOMER-13574"/>
<dbReference type="Proteomes" id="UP000000584">
    <property type="component" value="Chromosome 1"/>
</dbReference>
<dbReference type="GO" id="GO:0008446">
    <property type="term" value="F:GDP-mannose 4,6-dehydratase activity"/>
    <property type="evidence" value="ECO:0000318"/>
    <property type="project" value="GO_Central"/>
</dbReference>
<dbReference type="GO" id="GO:0070401">
    <property type="term" value="F:NADP+ binding"/>
    <property type="evidence" value="ECO:0007669"/>
    <property type="project" value="UniProtKB-UniRule"/>
</dbReference>
<dbReference type="GO" id="GO:0042351">
    <property type="term" value="P:'de novo' GDP-L-fucose biosynthetic process"/>
    <property type="evidence" value="ECO:0000318"/>
    <property type="project" value="GO_Central"/>
</dbReference>
<dbReference type="CDD" id="cd05260">
    <property type="entry name" value="GDP_MD_SDR_e"/>
    <property type="match status" value="1"/>
</dbReference>
<dbReference type="FunFam" id="3.40.50.720:FF:000924">
    <property type="entry name" value="GDP-mannose 4,6 dehydratase"/>
    <property type="match status" value="1"/>
</dbReference>
<dbReference type="Gene3D" id="3.40.50.720">
    <property type="entry name" value="NAD(P)-binding Rossmann-like Domain"/>
    <property type="match status" value="1"/>
</dbReference>
<dbReference type="Gene3D" id="3.90.25.10">
    <property type="entry name" value="UDP-galactose 4-epimerase, domain 1"/>
    <property type="match status" value="1"/>
</dbReference>
<dbReference type="HAMAP" id="MF_00955">
    <property type="entry name" value="GDP_Man_dehydratase"/>
    <property type="match status" value="1"/>
</dbReference>
<dbReference type="InterPro" id="IPR006368">
    <property type="entry name" value="GDP_Man_deHydtase"/>
</dbReference>
<dbReference type="InterPro" id="IPR016040">
    <property type="entry name" value="NAD(P)-bd_dom"/>
</dbReference>
<dbReference type="InterPro" id="IPR036291">
    <property type="entry name" value="NAD(P)-bd_dom_sf"/>
</dbReference>
<dbReference type="NCBIfam" id="TIGR01472">
    <property type="entry name" value="gmd"/>
    <property type="match status" value="1"/>
</dbReference>
<dbReference type="PANTHER" id="PTHR43715:SF1">
    <property type="entry name" value="GDP-MANNOSE 4,6 DEHYDRATASE"/>
    <property type="match status" value="1"/>
</dbReference>
<dbReference type="PANTHER" id="PTHR43715">
    <property type="entry name" value="GDP-MANNOSE 4,6-DEHYDRATASE"/>
    <property type="match status" value="1"/>
</dbReference>
<dbReference type="Pfam" id="PF16363">
    <property type="entry name" value="GDP_Man_Dehyd"/>
    <property type="match status" value="1"/>
</dbReference>
<dbReference type="SUPFAM" id="SSF51735">
    <property type="entry name" value="NAD(P)-binding Rossmann-fold domains"/>
    <property type="match status" value="1"/>
</dbReference>
<proteinExistence type="inferred from homology"/>
<gene>
    <name evidence="1" type="primary">gmd</name>
    <name type="synonym">rfbD</name>
    <name type="ordered locus">VC_0243</name>
</gene>
<feature type="chain" id="PRO_0000201717" description="GDP-mannose 4,6-dehydratase">
    <location>
        <begin position="1"/>
        <end position="373"/>
    </location>
</feature>
<feature type="active site" evidence="1">
    <location>
        <position position="134"/>
    </location>
</feature>
<feature type="active site" description="Nucleophile" evidence="1">
    <location>
        <position position="136"/>
    </location>
</feature>
<feature type="active site" description="Nucleophile" evidence="1">
    <location>
        <position position="158"/>
    </location>
</feature>
<feature type="binding site" evidence="1">
    <location>
        <begin position="10"/>
        <end position="15"/>
    </location>
    <ligand>
        <name>NADP(+)</name>
        <dbReference type="ChEBI" id="CHEBI:58349"/>
    </ligand>
</feature>
<feature type="binding site" evidence="1">
    <location>
        <begin position="65"/>
        <end position="66"/>
    </location>
    <ligand>
        <name>NADP(+)</name>
        <dbReference type="ChEBI" id="CHEBI:58349"/>
    </ligand>
</feature>
<feature type="binding site" evidence="1">
    <location>
        <begin position="87"/>
        <end position="91"/>
    </location>
    <ligand>
        <name>NADP(+)</name>
        <dbReference type="ChEBI" id="CHEBI:58349"/>
    </ligand>
</feature>
<feature type="binding site" evidence="1">
    <location>
        <position position="102"/>
    </location>
    <ligand>
        <name>NADP(+)</name>
        <dbReference type="ChEBI" id="CHEBI:58349"/>
    </ligand>
</feature>
<feature type="binding site" evidence="1">
    <location>
        <position position="162"/>
    </location>
    <ligand>
        <name>NADP(+)</name>
        <dbReference type="ChEBI" id="CHEBI:58349"/>
    </ligand>
</feature>
<feature type="binding site" evidence="1">
    <location>
        <position position="188"/>
    </location>
    <ligand>
        <name>NADP(+)</name>
        <dbReference type="ChEBI" id="CHEBI:58349"/>
    </ligand>
</feature>
<feature type="binding site" evidence="1">
    <location>
        <position position="193"/>
    </location>
    <ligand>
        <name>NADP(+)</name>
        <dbReference type="ChEBI" id="CHEBI:58349"/>
    </ligand>
</feature>
<comment type="function">
    <text evidence="1">Catalyzes the conversion of GDP-D-mannose to GDP-4-dehydro-6-deoxy-D-mannose.</text>
</comment>
<comment type="catalytic activity">
    <reaction evidence="1">
        <text>GDP-alpha-D-mannose = GDP-4-dehydro-alpha-D-rhamnose + H2O</text>
        <dbReference type="Rhea" id="RHEA:23820"/>
        <dbReference type="ChEBI" id="CHEBI:15377"/>
        <dbReference type="ChEBI" id="CHEBI:57527"/>
        <dbReference type="ChEBI" id="CHEBI:57964"/>
        <dbReference type="EC" id="4.2.1.47"/>
    </reaction>
</comment>
<comment type="cofactor">
    <cofactor evidence="1">
        <name>NADP(+)</name>
        <dbReference type="ChEBI" id="CHEBI:58349"/>
    </cofactor>
</comment>
<comment type="similarity">
    <text evidence="1">Belongs to the NAD(P)-dependent epimerase/dehydratase family. GDP-mannose 4,6-dehydratase subfamily.</text>
</comment>